<protein>
    <recommendedName>
        <fullName>SH2 domain-containing protein 1A</fullName>
    </recommendedName>
</protein>
<organism>
    <name type="scientific">Bos taurus</name>
    <name type="common">Bovine</name>
    <dbReference type="NCBI Taxonomy" id="9913"/>
    <lineage>
        <taxon>Eukaryota</taxon>
        <taxon>Metazoa</taxon>
        <taxon>Chordata</taxon>
        <taxon>Craniata</taxon>
        <taxon>Vertebrata</taxon>
        <taxon>Euteleostomi</taxon>
        <taxon>Mammalia</taxon>
        <taxon>Eutheria</taxon>
        <taxon>Laurasiatheria</taxon>
        <taxon>Artiodactyla</taxon>
        <taxon>Ruminantia</taxon>
        <taxon>Pecora</taxon>
        <taxon>Bovidae</taxon>
        <taxon>Bovinae</taxon>
        <taxon>Bos</taxon>
    </lineage>
</organism>
<sequence>MDAVAVYHGKISRETGEKLLLATGLDGSYLLRDSESVPGVYCLCVLYQGYIYTYRVSQTETGSWSAETAPGVHKRFFRKIKNLISAFQKPDQGIVIPLQYPVEKKPSARSTQGATGRRDDPDVFLKTP</sequence>
<evidence type="ECO:0000250" key="1">
    <source>
        <dbReference type="UniProtKB" id="B2RZ59"/>
    </source>
</evidence>
<evidence type="ECO:0000250" key="2">
    <source>
        <dbReference type="UniProtKB" id="O60880"/>
    </source>
</evidence>
<evidence type="ECO:0000250" key="3">
    <source>
        <dbReference type="UniProtKB" id="O88890"/>
    </source>
</evidence>
<evidence type="ECO:0000255" key="4">
    <source>
        <dbReference type="PROSITE-ProRule" id="PRU00191"/>
    </source>
</evidence>
<evidence type="ECO:0000256" key="5">
    <source>
        <dbReference type="SAM" id="MobiDB-lite"/>
    </source>
</evidence>
<reference key="1">
    <citation type="submission" date="2005-08" db="EMBL/GenBank/DDBJ databases">
        <authorList>
            <consortium name="NIH - Mammalian Gene Collection (MGC) project"/>
        </authorList>
    </citation>
    <scope>NUCLEOTIDE SEQUENCE [LARGE SCALE MRNA]</scope>
    <source>
        <strain>Hereford</strain>
        <tissue>Thymus</tissue>
    </source>
</reference>
<dbReference type="EMBL" id="BC103462">
    <property type="protein sequence ID" value="AAI03463.1"/>
    <property type="molecule type" value="mRNA"/>
</dbReference>
<dbReference type="RefSeq" id="NP_001029905.1">
    <property type="nucleotide sequence ID" value="NM_001034733.2"/>
</dbReference>
<dbReference type="SMR" id="Q3ZBB1"/>
<dbReference type="FunCoup" id="Q3ZBB1">
    <property type="interactions" value="391"/>
</dbReference>
<dbReference type="STRING" id="9913.ENSBTAP00000036814"/>
<dbReference type="PaxDb" id="9913-ENSBTAP00000036814"/>
<dbReference type="Ensembl" id="ENSBTAT00000126150.1">
    <property type="protein sequence ID" value="ENSBTAP00000090644.1"/>
    <property type="gene ID" value="ENSBTAG00000026067.4"/>
</dbReference>
<dbReference type="GeneID" id="613356"/>
<dbReference type="KEGG" id="bta:613356"/>
<dbReference type="CTD" id="4068"/>
<dbReference type="VEuPathDB" id="HostDB:ENSBTAG00000026067"/>
<dbReference type="VGNC" id="VGNC:56954">
    <property type="gene designation" value="SH2D1A"/>
</dbReference>
<dbReference type="eggNOG" id="KOG0565">
    <property type="taxonomic scope" value="Eukaryota"/>
</dbReference>
<dbReference type="GeneTree" id="ENSGT00940000155920"/>
<dbReference type="HOGENOM" id="CLU_125532_1_0_1"/>
<dbReference type="InParanoid" id="Q3ZBB1"/>
<dbReference type="OMA" id="YSPGRNE"/>
<dbReference type="OrthoDB" id="10053436at2759"/>
<dbReference type="TreeFam" id="TF343096"/>
<dbReference type="Proteomes" id="UP000009136">
    <property type="component" value="Chromosome X"/>
</dbReference>
<dbReference type="Bgee" id="ENSBTAG00000026067">
    <property type="expression patterns" value="Expressed in thymus and 76 other cell types or tissues"/>
</dbReference>
<dbReference type="GO" id="GO:0005737">
    <property type="term" value="C:cytoplasm"/>
    <property type="evidence" value="ECO:0007669"/>
    <property type="project" value="UniProtKB-SubCell"/>
</dbReference>
<dbReference type="GO" id="GO:0002250">
    <property type="term" value="P:adaptive immune response"/>
    <property type="evidence" value="ECO:0007669"/>
    <property type="project" value="UniProtKB-KW"/>
</dbReference>
<dbReference type="GO" id="GO:0007267">
    <property type="term" value="P:cell-cell signaling"/>
    <property type="evidence" value="ECO:0007669"/>
    <property type="project" value="InterPro"/>
</dbReference>
<dbReference type="GO" id="GO:0006968">
    <property type="term" value="P:cellular defense response"/>
    <property type="evidence" value="ECO:0007669"/>
    <property type="project" value="InterPro"/>
</dbReference>
<dbReference type="GO" id="GO:0045087">
    <property type="term" value="P:innate immune response"/>
    <property type="evidence" value="ECO:0007669"/>
    <property type="project" value="UniProtKB-KW"/>
</dbReference>
<dbReference type="CDD" id="cd10400">
    <property type="entry name" value="SH2_SAP1a"/>
    <property type="match status" value="1"/>
</dbReference>
<dbReference type="FunFam" id="3.30.505.10:FF:000062">
    <property type="entry name" value="SH2 domain-containing protein 1A"/>
    <property type="match status" value="1"/>
</dbReference>
<dbReference type="Gene3D" id="3.30.505.10">
    <property type="entry name" value="SH2 domain"/>
    <property type="match status" value="1"/>
</dbReference>
<dbReference type="InterPro" id="IPR000980">
    <property type="entry name" value="SH2"/>
</dbReference>
<dbReference type="InterPro" id="IPR036860">
    <property type="entry name" value="SH2_dom_sf"/>
</dbReference>
<dbReference type="InterPro" id="IPR017289">
    <property type="entry name" value="SH2_prot_1A"/>
</dbReference>
<dbReference type="InterPro" id="IPR035876">
    <property type="entry name" value="SH2D1A_SH2"/>
</dbReference>
<dbReference type="PANTHER" id="PTHR46051:SF1">
    <property type="entry name" value="INOSITOL POLYPHOSPHATE-RELATED PHOSPHATASE DOMAIN-CONTAINING PROTEIN"/>
    <property type="match status" value="1"/>
</dbReference>
<dbReference type="PANTHER" id="PTHR46051">
    <property type="entry name" value="SH2 DOMAIN-CONTAINING PROTEIN"/>
    <property type="match status" value="1"/>
</dbReference>
<dbReference type="Pfam" id="PF00017">
    <property type="entry name" value="SH2"/>
    <property type="match status" value="1"/>
</dbReference>
<dbReference type="PIRSF" id="PIRSF037828">
    <property type="entry name" value="SH2_p1A"/>
    <property type="match status" value="1"/>
</dbReference>
<dbReference type="PRINTS" id="PR00401">
    <property type="entry name" value="SH2DOMAIN"/>
</dbReference>
<dbReference type="SMART" id="SM00252">
    <property type="entry name" value="SH2"/>
    <property type="match status" value="1"/>
</dbReference>
<dbReference type="SUPFAM" id="SSF55550">
    <property type="entry name" value="SH2 domain"/>
    <property type="match status" value="1"/>
</dbReference>
<dbReference type="PROSITE" id="PS50001">
    <property type="entry name" value="SH2"/>
    <property type="match status" value="1"/>
</dbReference>
<feature type="chain" id="PRO_0000356882" description="SH2 domain-containing protein 1A">
    <location>
        <begin position="1"/>
        <end position="128"/>
    </location>
</feature>
<feature type="domain" description="SH2" evidence="4">
    <location>
        <begin position="6"/>
        <end position="102"/>
    </location>
</feature>
<feature type="region of interest" description="Interaction with FYN SH3 domain" evidence="3">
    <location>
        <begin position="67"/>
        <end position="92"/>
    </location>
</feature>
<feature type="region of interest" description="Disordered" evidence="5">
    <location>
        <begin position="104"/>
        <end position="128"/>
    </location>
</feature>
<feature type="compositionally biased region" description="Basic and acidic residues" evidence="5">
    <location>
        <begin position="116"/>
        <end position="128"/>
    </location>
</feature>
<feature type="modified residue" description="N6-acetyllysine" evidence="2">
    <location>
        <position position="89"/>
    </location>
</feature>
<gene>
    <name type="primary">SH2D1A</name>
</gene>
<comment type="function">
    <text evidence="1 2 3">Cytoplasmic adapter regulating receptors of the signaling lymphocytic activation molecule (SLAM) family such as SLAMF1, CD244, LY9, CD84, SLAMF6 and SLAMF7. In SLAM signaling seems to cooperate with SH2D1B/EAT-2. Initially it has been proposed that association with SLAMF1 prevents SLAMF1 binding to inhibitory effectors including INPP5D/SHIP1 and PTPN11/SHP-2. However, by simultaneous interactions, recruits FYN which subsequently phosphorylates and activates SLAMF1. Positively regulates CD244/2B4- and CD84-mediated natural killer (NK) cell functions. Can also promote CD48-, SLAMF6 -, LY9-, and SLAMF7-mediated NK cell activation. In the context of NK cell-mediated cytotoxicity enhances conjugate formation with target cells (By similarity). May also regulate the activity of the neurotrophin receptors NTRK1, NTRK2 and NTRK3 (By similarity).</text>
</comment>
<comment type="subunit">
    <text evidence="1 2">Interacts with CD84, CD244, LY9, SLAMF1 and FYN. Interacts with NTRK1, NTRK2 and NTRK3 (By similarity).</text>
</comment>
<comment type="subcellular location">
    <subcellularLocation>
        <location evidence="2">Cytoplasm</location>
    </subcellularLocation>
</comment>
<accession>Q3ZBB1</accession>
<name>SH21A_BOVIN</name>
<keyword id="KW-0007">Acetylation</keyword>
<keyword id="KW-1064">Adaptive immunity</keyword>
<keyword id="KW-0963">Cytoplasm</keyword>
<keyword id="KW-0391">Immunity</keyword>
<keyword id="KW-0399">Innate immunity</keyword>
<keyword id="KW-1185">Reference proteome</keyword>
<keyword id="KW-0727">SH2 domain</keyword>
<proteinExistence type="evidence at transcript level"/>